<reference key="1">
    <citation type="journal article" date="2010" name="J. Bacteriol.">
        <title>Whole genome sequences of two Xylella fastidiosa strains (M12 and M23) causing almond leaf scorch disease in California.</title>
        <authorList>
            <person name="Chen J."/>
            <person name="Xie G."/>
            <person name="Han S."/>
            <person name="Chertkov O."/>
            <person name="Sims D."/>
            <person name="Civerolo E.L."/>
        </authorList>
    </citation>
    <scope>NUCLEOTIDE SEQUENCE [LARGE SCALE GENOMIC DNA]</scope>
    <source>
        <strain>M12</strain>
    </source>
</reference>
<name>RS5_XYLFM</name>
<proteinExistence type="inferred from homology"/>
<gene>
    <name evidence="1" type="primary">rpsE</name>
    <name type="ordered locus">Xfasm12_0511</name>
</gene>
<feature type="chain" id="PRO_1000140909" description="Small ribosomal subunit protein uS5">
    <location>
        <begin position="1"/>
        <end position="179"/>
    </location>
</feature>
<feature type="domain" description="S5 DRBM" evidence="1">
    <location>
        <begin position="22"/>
        <end position="85"/>
    </location>
</feature>
<accession>B0U5L6</accession>
<dbReference type="EMBL" id="CP000941">
    <property type="protein sequence ID" value="ACA11520.1"/>
    <property type="molecule type" value="Genomic_DNA"/>
</dbReference>
<dbReference type="RefSeq" id="WP_004086539.1">
    <property type="nucleotide sequence ID" value="NC_010513.1"/>
</dbReference>
<dbReference type="SMR" id="B0U5L6"/>
<dbReference type="KEGG" id="xfm:Xfasm12_0511"/>
<dbReference type="HOGENOM" id="CLU_065898_2_2_6"/>
<dbReference type="GO" id="GO:0015935">
    <property type="term" value="C:small ribosomal subunit"/>
    <property type="evidence" value="ECO:0007669"/>
    <property type="project" value="InterPro"/>
</dbReference>
<dbReference type="GO" id="GO:0019843">
    <property type="term" value="F:rRNA binding"/>
    <property type="evidence" value="ECO:0007669"/>
    <property type="project" value="UniProtKB-UniRule"/>
</dbReference>
<dbReference type="GO" id="GO:0003735">
    <property type="term" value="F:structural constituent of ribosome"/>
    <property type="evidence" value="ECO:0007669"/>
    <property type="project" value="InterPro"/>
</dbReference>
<dbReference type="GO" id="GO:0006412">
    <property type="term" value="P:translation"/>
    <property type="evidence" value="ECO:0007669"/>
    <property type="project" value="UniProtKB-UniRule"/>
</dbReference>
<dbReference type="FunFam" id="3.30.160.20:FF:000001">
    <property type="entry name" value="30S ribosomal protein S5"/>
    <property type="match status" value="1"/>
</dbReference>
<dbReference type="FunFam" id="3.30.230.10:FF:000002">
    <property type="entry name" value="30S ribosomal protein S5"/>
    <property type="match status" value="1"/>
</dbReference>
<dbReference type="Gene3D" id="3.30.160.20">
    <property type="match status" value="1"/>
</dbReference>
<dbReference type="Gene3D" id="3.30.230.10">
    <property type="match status" value="1"/>
</dbReference>
<dbReference type="HAMAP" id="MF_01307_B">
    <property type="entry name" value="Ribosomal_uS5_B"/>
    <property type="match status" value="1"/>
</dbReference>
<dbReference type="InterPro" id="IPR020568">
    <property type="entry name" value="Ribosomal_Su5_D2-typ_SF"/>
</dbReference>
<dbReference type="InterPro" id="IPR000851">
    <property type="entry name" value="Ribosomal_uS5"/>
</dbReference>
<dbReference type="InterPro" id="IPR005712">
    <property type="entry name" value="Ribosomal_uS5_bac-type"/>
</dbReference>
<dbReference type="InterPro" id="IPR005324">
    <property type="entry name" value="Ribosomal_uS5_C"/>
</dbReference>
<dbReference type="InterPro" id="IPR013810">
    <property type="entry name" value="Ribosomal_uS5_N"/>
</dbReference>
<dbReference type="InterPro" id="IPR018192">
    <property type="entry name" value="Ribosomal_uS5_N_CS"/>
</dbReference>
<dbReference type="InterPro" id="IPR014721">
    <property type="entry name" value="Ribsml_uS5_D2-typ_fold_subgr"/>
</dbReference>
<dbReference type="NCBIfam" id="TIGR01021">
    <property type="entry name" value="rpsE_bact"/>
    <property type="match status" value="1"/>
</dbReference>
<dbReference type="PANTHER" id="PTHR48277">
    <property type="entry name" value="MITOCHONDRIAL RIBOSOMAL PROTEIN S5"/>
    <property type="match status" value="1"/>
</dbReference>
<dbReference type="PANTHER" id="PTHR48277:SF1">
    <property type="entry name" value="MITOCHONDRIAL RIBOSOMAL PROTEIN S5"/>
    <property type="match status" value="1"/>
</dbReference>
<dbReference type="Pfam" id="PF00333">
    <property type="entry name" value="Ribosomal_S5"/>
    <property type="match status" value="1"/>
</dbReference>
<dbReference type="Pfam" id="PF03719">
    <property type="entry name" value="Ribosomal_S5_C"/>
    <property type="match status" value="1"/>
</dbReference>
<dbReference type="SUPFAM" id="SSF54768">
    <property type="entry name" value="dsRNA-binding domain-like"/>
    <property type="match status" value="1"/>
</dbReference>
<dbReference type="SUPFAM" id="SSF54211">
    <property type="entry name" value="Ribosomal protein S5 domain 2-like"/>
    <property type="match status" value="1"/>
</dbReference>
<dbReference type="PROSITE" id="PS00585">
    <property type="entry name" value="RIBOSOMAL_S5"/>
    <property type="match status" value="1"/>
</dbReference>
<dbReference type="PROSITE" id="PS50881">
    <property type="entry name" value="S5_DSRBD"/>
    <property type="match status" value="1"/>
</dbReference>
<protein>
    <recommendedName>
        <fullName evidence="1">Small ribosomal subunit protein uS5</fullName>
    </recommendedName>
    <alternativeName>
        <fullName evidence="2">30S ribosomal protein S5</fullName>
    </alternativeName>
</protein>
<organism>
    <name type="scientific">Xylella fastidiosa (strain M12)</name>
    <dbReference type="NCBI Taxonomy" id="405440"/>
    <lineage>
        <taxon>Bacteria</taxon>
        <taxon>Pseudomonadati</taxon>
        <taxon>Pseudomonadota</taxon>
        <taxon>Gammaproteobacteria</taxon>
        <taxon>Lysobacterales</taxon>
        <taxon>Lysobacteraceae</taxon>
        <taxon>Xylella</taxon>
    </lineage>
</organism>
<comment type="function">
    <text evidence="1">With S4 and S12 plays an important role in translational accuracy.</text>
</comment>
<comment type="function">
    <text evidence="1">Located at the back of the 30S subunit body where it stabilizes the conformation of the head with respect to the body.</text>
</comment>
<comment type="subunit">
    <text evidence="1">Part of the 30S ribosomal subunit. Contacts proteins S4 and S8.</text>
</comment>
<comment type="domain">
    <text>The N-terminal domain interacts with the head of the 30S subunit; the C-terminal domain interacts with the body and contacts protein S4. The interaction surface between S4 and S5 is involved in control of translational fidelity.</text>
</comment>
<comment type="similarity">
    <text evidence="1">Belongs to the universal ribosomal protein uS5 family.</text>
</comment>
<evidence type="ECO:0000255" key="1">
    <source>
        <dbReference type="HAMAP-Rule" id="MF_01307"/>
    </source>
</evidence>
<evidence type="ECO:0000305" key="2"/>
<keyword id="KW-0687">Ribonucleoprotein</keyword>
<keyword id="KW-0689">Ribosomal protein</keyword>
<keyword id="KW-0694">RNA-binding</keyword>
<keyword id="KW-0699">rRNA-binding</keyword>
<sequence>MAEERSQRSRDRSREEKIDDGMIEKLVAVNRVSKTVKGGRQFTFTALTIVGNGEGSVGFGYGKAREVPVAIQKSMEYARKRMANVSLNNGTLWHPVKANHGAASVFMKPASEGTGVIAGGAMRAVLEAVGVKDVLAKAIGSRNPINLVRATLKGLEDMQSPTHIALKRGKNVRDFSHGS</sequence>